<name>ASR_YERPY</name>
<protein>
    <recommendedName>
        <fullName evidence="1">Acid shock protein</fullName>
    </recommendedName>
</protein>
<gene>
    <name evidence="1" type="primary">asr</name>
    <name type="ordered locus">YPK_1120</name>
</gene>
<proteinExistence type="inferred from homology"/>
<keyword id="KW-0574">Periplasm</keyword>
<keyword id="KW-0732">Signal</keyword>
<organism>
    <name type="scientific">Yersinia pseudotuberculosis serotype O:3 (strain YPIII)</name>
    <dbReference type="NCBI Taxonomy" id="502800"/>
    <lineage>
        <taxon>Bacteria</taxon>
        <taxon>Pseudomonadati</taxon>
        <taxon>Pseudomonadota</taxon>
        <taxon>Gammaproteobacteria</taxon>
        <taxon>Enterobacterales</taxon>
        <taxon>Yersiniaceae</taxon>
        <taxon>Yersinia</taxon>
    </lineage>
</organism>
<comment type="function">
    <text evidence="1">Required for growth and/or survival at acidic conditions.</text>
</comment>
<comment type="subcellular location">
    <subcellularLocation>
        <location evidence="1">Periplasm</location>
    </subcellularLocation>
</comment>
<comment type="PTM">
    <text evidence="1">Proteolytic processing gives rise to the active protein.</text>
</comment>
<comment type="similarity">
    <text evidence="1">Belongs to the Asr family.</text>
</comment>
<evidence type="ECO:0000255" key="1">
    <source>
        <dbReference type="HAMAP-Rule" id="MF_00546"/>
    </source>
</evidence>
<evidence type="ECO:0000256" key="2">
    <source>
        <dbReference type="SAM" id="MobiDB-lite"/>
    </source>
</evidence>
<accession>B1JR58</accession>
<reference key="1">
    <citation type="submission" date="2008-02" db="EMBL/GenBank/DDBJ databases">
        <title>Complete sequence of Yersinia pseudotuberculosis YPIII.</title>
        <authorList>
            <consortium name="US DOE Joint Genome Institute"/>
            <person name="Copeland A."/>
            <person name="Lucas S."/>
            <person name="Lapidus A."/>
            <person name="Glavina del Rio T."/>
            <person name="Dalin E."/>
            <person name="Tice H."/>
            <person name="Bruce D."/>
            <person name="Goodwin L."/>
            <person name="Pitluck S."/>
            <person name="Munk A.C."/>
            <person name="Brettin T."/>
            <person name="Detter J.C."/>
            <person name="Han C."/>
            <person name="Tapia R."/>
            <person name="Schmutz J."/>
            <person name="Larimer F."/>
            <person name="Land M."/>
            <person name="Hauser L."/>
            <person name="Challacombe J.F."/>
            <person name="Green L."/>
            <person name="Lindler L.E."/>
            <person name="Nikolich M.P."/>
            <person name="Richardson P."/>
        </authorList>
    </citation>
    <scope>NUCLEOTIDE SEQUENCE [LARGE SCALE GENOMIC DNA]</scope>
    <source>
        <strain>YPIII</strain>
    </source>
</reference>
<dbReference type="EMBL" id="CP000950">
    <property type="protein sequence ID" value="ACA67418.1"/>
    <property type="molecule type" value="Genomic_DNA"/>
</dbReference>
<dbReference type="RefSeq" id="WP_011192847.1">
    <property type="nucleotide sequence ID" value="NZ_CP009792.1"/>
</dbReference>
<dbReference type="GeneID" id="49785034"/>
<dbReference type="KEGG" id="ypy:YPK_1120"/>
<dbReference type="PATRIC" id="fig|502800.11.peg.1750"/>
<dbReference type="GO" id="GO:0042597">
    <property type="term" value="C:periplasmic space"/>
    <property type="evidence" value="ECO:0007669"/>
    <property type="project" value="UniProtKB-SubCell"/>
</dbReference>
<dbReference type="HAMAP" id="MF_00546">
    <property type="entry name" value="Asr"/>
    <property type="match status" value="1"/>
</dbReference>
<dbReference type="InterPro" id="IPR023497">
    <property type="entry name" value="Acid_shock"/>
</dbReference>
<dbReference type="NCBIfam" id="NF033636">
    <property type="entry name" value="acid_shock_Asr"/>
    <property type="match status" value="1"/>
</dbReference>
<dbReference type="Pfam" id="PF06392">
    <property type="entry name" value="Asr"/>
    <property type="match status" value="1"/>
</dbReference>
<sequence>MKKVLALMVAATLGLSSVAFAADTTATATPAATSTTATVAAQTKATQHQKHKVTKKTTEQKAQAAKKHEKKASVQKAPVQKAQAAKKHVKKASVQKAPVQKAQAAKKHHKTAKKPVAAPAA</sequence>
<feature type="signal peptide" evidence="1">
    <location>
        <begin position="1"/>
        <end position="21"/>
    </location>
</feature>
<feature type="propeptide" id="PRO_1000128939" evidence="1">
    <location>
        <begin position="22"/>
        <end position="63"/>
    </location>
</feature>
<feature type="chain" id="PRO_1000128940" description="Acid shock protein">
    <location>
        <begin position="64"/>
        <end position="121"/>
    </location>
</feature>
<feature type="region of interest" description="Disordered" evidence="2">
    <location>
        <begin position="40"/>
        <end position="121"/>
    </location>
</feature>
<feature type="compositionally biased region" description="Low complexity" evidence="2">
    <location>
        <begin position="74"/>
        <end position="83"/>
    </location>
</feature>
<feature type="compositionally biased region" description="Basic residues" evidence="2">
    <location>
        <begin position="84"/>
        <end position="93"/>
    </location>
</feature>
<feature type="compositionally biased region" description="Low complexity" evidence="2">
    <location>
        <begin position="94"/>
        <end position="103"/>
    </location>
</feature>
<feature type="compositionally biased region" description="Basic residues" evidence="2">
    <location>
        <begin position="104"/>
        <end position="113"/>
    </location>
</feature>